<evidence type="ECO:0000250" key="1"/>
<evidence type="ECO:0000305" key="2"/>
<dbReference type="EMBL" id="BA000004">
    <property type="protein sequence ID" value="BAB06578.1"/>
    <property type="molecule type" value="Genomic_DNA"/>
</dbReference>
<dbReference type="PIR" id="C84007">
    <property type="entry name" value="C84007"/>
</dbReference>
<dbReference type="RefSeq" id="WP_010899006.1">
    <property type="nucleotide sequence ID" value="NC_002570.2"/>
</dbReference>
<dbReference type="SMR" id="Q9K8Z3"/>
<dbReference type="STRING" id="272558.gene:10728769"/>
<dbReference type="KEGG" id="bha:BH2859"/>
<dbReference type="eggNOG" id="COG4862">
    <property type="taxonomic scope" value="Bacteria"/>
</dbReference>
<dbReference type="HOGENOM" id="CLU_071496_2_1_9"/>
<dbReference type="OrthoDB" id="2360201at2"/>
<dbReference type="Proteomes" id="UP000001258">
    <property type="component" value="Chromosome"/>
</dbReference>
<dbReference type="GO" id="GO:0030674">
    <property type="term" value="F:protein-macromolecule adaptor activity"/>
    <property type="evidence" value="ECO:0007669"/>
    <property type="project" value="UniProtKB-UniRule"/>
</dbReference>
<dbReference type="GO" id="GO:0030420">
    <property type="term" value="P:establishment of competence for transformation"/>
    <property type="evidence" value="ECO:0007669"/>
    <property type="project" value="UniProtKB-KW"/>
</dbReference>
<dbReference type="GO" id="GO:0045808">
    <property type="term" value="P:negative regulation of establishment of competence for transformation"/>
    <property type="evidence" value="ECO:0007669"/>
    <property type="project" value="UniProtKB-UniRule"/>
</dbReference>
<dbReference type="GO" id="GO:0042174">
    <property type="term" value="P:negative regulation of sporulation resulting in formation of a cellular spore"/>
    <property type="evidence" value="ECO:0007669"/>
    <property type="project" value="UniProtKB-UniRule"/>
</dbReference>
<dbReference type="GO" id="GO:0030435">
    <property type="term" value="P:sporulation resulting in formation of a cellular spore"/>
    <property type="evidence" value="ECO:0007669"/>
    <property type="project" value="UniProtKB-KW"/>
</dbReference>
<dbReference type="Gene3D" id="3.30.70.1950">
    <property type="match status" value="1"/>
</dbReference>
<dbReference type="HAMAP" id="MF_01124">
    <property type="entry name" value="MecA"/>
    <property type="match status" value="1"/>
</dbReference>
<dbReference type="InterPro" id="IPR038471">
    <property type="entry name" value="MecA_C_sf"/>
</dbReference>
<dbReference type="InterPro" id="IPR008681">
    <property type="entry name" value="Neg-reg_MecA"/>
</dbReference>
<dbReference type="NCBIfam" id="NF002644">
    <property type="entry name" value="PRK02315.1-5"/>
    <property type="match status" value="1"/>
</dbReference>
<dbReference type="PANTHER" id="PTHR39161">
    <property type="entry name" value="ADAPTER PROTEIN MECA"/>
    <property type="match status" value="1"/>
</dbReference>
<dbReference type="PANTHER" id="PTHR39161:SF1">
    <property type="entry name" value="ADAPTER PROTEIN MECA 1"/>
    <property type="match status" value="1"/>
</dbReference>
<dbReference type="Pfam" id="PF05389">
    <property type="entry name" value="MecA"/>
    <property type="match status" value="1"/>
</dbReference>
<dbReference type="PIRSF" id="PIRSF029008">
    <property type="entry name" value="MecA"/>
    <property type="match status" value="1"/>
</dbReference>
<name>MECA2_HALH5</name>
<keyword id="KW-0178">Competence</keyword>
<keyword id="KW-1185">Reference proteome</keyword>
<keyword id="KW-0749">Sporulation</keyword>
<organism>
    <name type="scientific">Halalkalibacterium halodurans (strain ATCC BAA-125 / DSM 18197 / FERM 7344 / JCM 9153 / C-125)</name>
    <name type="common">Bacillus halodurans</name>
    <dbReference type="NCBI Taxonomy" id="272558"/>
    <lineage>
        <taxon>Bacteria</taxon>
        <taxon>Bacillati</taxon>
        <taxon>Bacillota</taxon>
        <taxon>Bacilli</taxon>
        <taxon>Bacillales</taxon>
        <taxon>Bacillaceae</taxon>
        <taxon>Halalkalibacterium (ex Joshi et al. 2022)</taxon>
    </lineage>
</organism>
<feature type="chain" id="PRO_0000212265" description="Adapter protein MecA 2">
    <location>
        <begin position="1"/>
        <end position="212"/>
    </location>
</feature>
<comment type="function">
    <text evidence="1">Enables the recognition and targeting of unfolded and aggregated proteins to the ClpC protease or to other proteins involved in proteolysis. Acts negatively in the development of competence by binding ComK and recruiting it to the ClpCP protease. When overexpressed, inhibits sporulation. Also involved in Spx degradation by ClpC (By similarity).</text>
</comment>
<comment type="subunit">
    <text evidence="1">Homodimer.</text>
</comment>
<comment type="domain">
    <text>The N-terminal domain has binding sites for ComK and probably for unfolded/aggregated proteins; the C-terminal domain interacts with ClpC.</text>
</comment>
<comment type="similarity">
    <text evidence="2">Belongs to the MecA family.</text>
</comment>
<protein>
    <recommendedName>
        <fullName>Adapter protein MecA 2</fullName>
    </recommendedName>
</protein>
<sequence length="212" mass="24885">MEIERINDSTVKFFITYKDIESRGFDRDEIWYNRERGEELFFEMMNEANDREDFELEGPLWIQVHALEKGLEIVVTRGQISDGNVKLEIPVTQEDGDGQGQESSMMTEDDFLEESLEIVIGFADFEDIVDLSHNFFIDDINNTLVHFEGTYYLHVVFNDETYSEDEQDDMLSQMLEYGYESDLSIYRIMEYGKVIIDSNALTVVREQFPKRA</sequence>
<reference key="1">
    <citation type="journal article" date="2000" name="Nucleic Acids Res.">
        <title>Complete genome sequence of the alkaliphilic bacterium Bacillus halodurans and genomic sequence comparison with Bacillus subtilis.</title>
        <authorList>
            <person name="Takami H."/>
            <person name="Nakasone K."/>
            <person name="Takaki Y."/>
            <person name="Maeno G."/>
            <person name="Sasaki R."/>
            <person name="Masui N."/>
            <person name="Fuji F."/>
            <person name="Hirama C."/>
            <person name="Nakamura Y."/>
            <person name="Ogasawara N."/>
            <person name="Kuhara S."/>
            <person name="Horikoshi K."/>
        </authorList>
    </citation>
    <scope>NUCLEOTIDE SEQUENCE [LARGE SCALE GENOMIC DNA]</scope>
    <source>
        <strain>ATCC BAA-125 / DSM 18197 / FERM 7344 / JCM 9153 / C-125</strain>
    </source>
</reference>
<proteinExistence type="inferred from homology"/>
<gene>
    <name type="primary">mecA2</name>
    <name type="ordered locus">BH2859</name>
</gene>
<accession>Q9K8Z3</accession>